<keyword id="KW-0002">3D-structure</keyword>
<keyword id="KW-0025">Alternative splicing</keyword>
<keyword id="KW-0227">DNA damage</keyword>
<keyword id="KW-0234">DNA repair</keyword>
<keyword id="KW-0237">DNA synthesis</keyword>
<keyword id="KW-0238">DNA-binding</keyword>
<keyword id="KW-0460">Magnesium</keyword>
<keyword id="KW-0479">Metal-binding</keyword>
<keyword id="KW-0548">Nucleotidyltransferase</keyword>
<keyword id="KW-0539">Nucleus</keyword>
<keyword id="KW-1267">Proteomics identification</keyword>
<keyword id="KW-1185">Reference proteome</keyword>
<keyword id="KW-0808">Transferase</keyword>
<reference key="1">
    <citation type="journal article" date="1999" name="Nucleic Acids Res.">
        <title>The human REV1 gene codes for a DNA template-dependent dCMP transferase.</title>
        <authorList>
            <person name="Lin W."/>
            <person name="Xin H."/>
            <person name="Zhang X."/>
            <person name="Wu X."/>
            <person name="Yuan F."/>
            <person name="Wang Z."/>
        </authorList>
    </citation>
    <scope>NUCLEOTIDE SEQUENCE [MRNA] (ISOFORM 1)</scope>
    <scope>FUNCTION</scope>
    <scope>TISSUE SPECIFICITY</scope>
    <source>
        <tissue>Bone marrow</tissue>
        <tissue>Leukocyte</tissue>
        <tissue>T-cell</tissue>
    </source>
</reference>
<reference key="2">
    <citation type="journal article" date="2000" name="Proc. Natl. Acad. Sci. U.S.A.">
        <title>The function of the human homolog of Saccharomyces cerevisiae REV1 is required for mutagenesis induced by UV light.</title>
        <authorList>
            <person name="Gibbs P.E.M."/>
            <person name="Wang X.-D."/>
            <person name="Li Z."/>
            <person name="McManus T.P."/>
            <person name="McGregor W.G."/>
            <person name="Lawrence C.W."/>
            <person name="Maher V.M."/>
        </authorList>
    </citation>
    <scope>NUCLEOTIDE SEQUENCE [MRNA] (ISOFORM 1)</scope>
    <scope>ROLE IN UV-INDUCED MUTAGENESIS</scope>
    <source>
        <tissue>Brain</tissue>
    </source>
</reference>
<reference key="3">
    <citation type="journal article" date="2001" name="J. Biol. Chem.">
        <title>Deoxycytidyl transferase activity of the human REV1 protein is closely associated with the conserved polymerase domain.</title>
        <authorList>
            <person name="Masuda Y."/>
            <person name="Takahashi M."/>
            <person name="Tsunekuni N."/>
            <person name="Minami T."/>
            <person name="Sumii M."/>
            <person name="Miyagawa K."/>
            <person name="Kamiya K."/>
        </authorList>
    </citation>
    <scope>NUCLEOTIDE SEQUENCE [MRNA] (ISOFORMS 1 AND 2)</scope>
    <scope>FUNCTION</scope>
    <scope>MUTAGENESIS OF ASP-570 AND GLU-571</scope>
    <scope>TISSUE SPECIFICITY</scope>
    <source>
        <tissue>Mammary cancer</tissue>
        <tissue>Testis</tissue>
    </source>
</reference>
<reference key="4">
    <citation type="journal article" date="2001" name="J. Biol. Chem.">
        <title>Interactions in the error-prone postreplication repair proteins hREV1, hREV3, and hREV7.</title>
        <authorList>
            <person name="Murakumo Y."/>
            <person name="Ogura Y."/>
            <person name="Ishii H."/>
            <person name="Numata S."/>
            <person name="Ichihara M."/>
            <person name="Croce C.M."/>
            <person name="Fishel R."/>
            <person name="Takahashi M."/>
        </authorList>
    </citation>
    <scope>NUCLEOTIDE SEQUENCE [MRNA] (ISOFORM 1)</scope>
    <scope>FUNCTION</scope>
    <scope>TISSUE SPECIFICITY</scope>
    <scope>INTERACTION WITH REV3L AND MAD2L2</scope>
    <source>
        <tissue>Testis</tissue>
    </source>
</reference>
<reference key="5">
    <citation type="journal article" date="2004" name="Nat. Genet.">
        <title>Complete sequencing and characterization of 21,243 full-length human cDNAs.</title>
        <authorList>
            <person name="Ota T."/>
            <person name="Suzuki Y."/>
            <person name="Nishikawa T."/>
            <person name="Otsuki T."/>
            <person name="Sugiyama T."/>
            <person name="Irie R."/>
            <person name="Wakamatsu A."/>
            <person name="Hayashi K."/>
            <person name="Sato H."/>
            <person name="Nagai K."/>
            <person name="Kimura K."/>
            <person name="Makita H."/>
            <person name="Sekine M."/>
            <person name="Obayashi M."/>
            <person name="Nishi T."/>
            <person name="Shibahara T."/>
            <person name="Tanaka T."/>
            <person name="Ishii S."/>
            <person name="Yamamoto J."/>
            <person name="Saito K."/>
            <person name="Kawai Y."/>
            <person name="Isono Y."/>
            <person name="Nakamura Y."/>
            <person name="Nagahari K."/>
            <person name="Murakami K."/>
            <person name="Yasuda T."/>
            <person name="Iwayanagi T."/>
            <person name="Wagatsuma M."/>
            <person name="Shiratori A."/>
            <person name="Sudo H."/>
            <person name="Hosoiri T."/>
            <person name="Kaku Y."/>
            <person name="Kodaira H."/>
            <person name="Kondo H."/>
            <person name="Sugawara M."/>
            <person name="Takahashi M."/>
            <person name="Kanda K."/>
            <person name="Yokoi T."/>
            <person name="Furuya T."/>
            <person name="Kikkawa E."/>
            <person name="Omura Y."/>
            <person name="Abe K."/>
            <person name="Kamihara K."/>
            <person name="Katsuta N."/>
            <person name="Sato K."/>
            <person name="Tanikawa M."/>
            <person name="Yamazaki M."/>
            <person name="Ninomiya K."/>
            <person name="Ishibashi T."/>
            <person name="Yamashita H."/>
            <person name="Murakawa K."/>
            <person name="Fujimori K."/>
            <person name="Tanai H."/>
            <person name="Kimata M."/>
            <person name="Watanabe M."/>
            <person name="Hiraoka S."/>
            <person name="Chiba Y."/>
            <person name="Ishida S."/>
            <person name="Ono Y."/>
            <person name="Takiguchi S."/>
            <person name="Watanabe S."/>
            <person name="Yosida M."/>
            <person name="Hotuta T."/>
            <person name="Kusano J."/>
            <person name="Kanehori K."/>
            <person name="Takahashi-Fujii A."/>
            <person name="Hara H."/>
            <person name="Tanase T.-O."/>
            <person name="Nomura Y."/>
            <person name="Togiya S."/>
            <person name="Komai F."/>
            <person name="Hara R."/>
            <person name="Takeuchi K."/>
            <person name="Arita M."/>
            <person name="Imose N."/>
            <person name="Musashino K."/>
            <person name="Yuuki H."/>
            <person name="Oshima A."/>
            <person name="Sasaki N."/>
            <person name="Aotsuka S."/>
            <person name="Yoshikawa Y."/>
            <person name="Matsunawa H."/>
            <person name="Ichihara T."/>
            <person name="Shiohata N."/>
            <person name="Sano S."/>
            <person name="Moriya S."/>
            <person name="Momiyama H."/>
            <person name="Satoh N."/>
            <person name="Takami S."/>
            <person name="Terashima Y."/>
            <person name="Suzuki O."/>
            <person name="Nakagawa S."/>
            <person name="Senoh A."/>
            <person name="Mizoguchi H."/>
            <person name="Goto Y."/>
            <person name="Shimizu F."/>
            <person name="Wakebe H."/>
            <person name="Hishigaki H."/>
            <person name="Watanabe T."/>
            <person name="Sugiyama A."/>
            <person name="Takemoto M."/>
            <person name="Kawakami B."/>
            <person name="Yamazaki M."/>
            <person name="Watanabe K."/>
            <person name="Kumagai A."/>
            <person name="Itakura S."/>
            <person name="Fukuzumi Y."/>
            <person name="Fujimori Y."/>
            <person name="Komiyama M."/>
            <person name="Tashiro H."/>
            <person name="Tanigami A."/>
            <person name="Fujiwara T."/>
            <person name="Ono T."/>
            <person name="Yamada K."/>
            <person name="Fujii Y."/>
            <person name="Ozaki K."/>
            <person name="Hirao M."/>
            <person name="Ohmori Y."/>
            <person name="Kawabata A."/>
            <person name="Hikiji T."/>
            <person name="Kobatake N."/>
            <person name="Inagaki H."/>
            <person name="Ikema Y."/>
            <person name="Okamoto S."/>
            <person name="Okitani R."/>
            <person name="Kawakami T."/>
            <person name="Noguchi S."/>
            <person name="Itoh T."/>
            <person name="Shigeta K."/>
            <person name="Senba T."/>
            <person name="Matsumura K."/>
            <person name="Nakajima Y."/>
            <person name="Mizuno T."/>
            <person name="Morinaga M."/>
            <person name="Sasaki M."/>
            <person name="Togashi T."/>
            <person name="Oyama M."/>
            <person name="Hata H."/>
            <person name="Watanabe M."/>
            <person name="Komatsu T."/>
            <person name="Mizushima-Sugano J."/>
            <person name="Satoh T."/>
            <person name="Shirai Y."/>
            <person name="Takahashi Y."/>
            <person name="Nakagawa K."/>
            <person name="Okumura K."/>
            <person name="Nagase T."/>
            <person name="Nomura N."/>
            <person name="Kikuchi H."/>
            <person name="Masuho Y."/>
            <person name="Yamashita R."/>
            <person name="Nakai K."/>
            <person name="Yada T."/>
            <person name="Nakamura Y."/>
            <person name="Ohara O."/>
            <person name="Isogai T."/>
            <person name="Sugano S."/>
        </authorList>
    </citation>
    <scope>NUCLEOTIDE SEQUENCE [LARGE SCALE MRNA] (ISOFORM 3)</scope>
    <source>
        <tissue>Placenta</tissue>
    </source>
</reference>
<reference key="6">
    <citation type="journal article" date="2005" name="Nature">
        <title>Generation and annotation of the DNA sequences of human chromosomes 2 and 4.</title>
        <authorList>
            <person name="Hillier L.W."/>
            <person name="Graves T.A."/>
            <person name="Fulton R.S."/>
            <person name="Fulton L.A."/>
            <person name="Pepin K.H."/>
            <person name="Minx P."/>
            <person name="Wagner-McPherson C."/>
            <person name="Layman D."/>
            <person name="Wylie K."/>
            <person name="Sekhon M."/>
            <person name="Becker M.C."/>
            <person name="Fewell G.A."/>
            <person name="Delehaunty K.D."/>
            <person name="Miner T.L."/>
            <person name="Nash W.E."/>
            <person name="Kremitzki C."/>
            <person name="Oddy L."/>
            <person name="Du H."/>
            <person name="Sun H."/>
            <person name="Bradshaw-Cordum H."/>
            <person name="Ali J."/>
            <person name="Carter J."/>
            <person name="Cordes M."/>
            <person name="Harris A."/>
            <person name="Isak A."/>
            <person name="van Brunt A."/>
            <person name="Nguyen C."/>
            <person name="Du F."/>
            <person name="Courtney L."/>
            <person name="Kalicki J."/>
            <person name="Ozersky P."/>
            <person name="Abbott S."/>
            <person name="Armstrong J."/>
            <person name="Belter E.A."/>
            <person name="Caruso L."/>
            <person name="Cedroni M."/>
            <person name="Cotton M."/>
            <person name="Davidson T."/>
            <person name="Desai A."/>
            <person name="Elliott G."/>
            <person name="Erb T."/>
            <person name="Fronick C."/>
            <person name="Gaige T."/>
            <person name="Haakenson W."/>
            <person name="Haglund K."/>
            <person name="Holmes A."/>
            <person name="Harkins R."/>
            <person name="Kim K."/>
            <person name="Kruchowski S.S."/>
            <person name="Strong C.M."/>
            <person name="Grewal N."/>
            <person name="Goyea E."/>
            <person name="Hou S."/>
            <person name="Levy A."/>
            <person name="Martinka S."/>
            <person name="Mead K."/>
            <person name="McLellan M.D."/>
            <person name="Meyer R."/>
            <person name="Randall-Maher J."/>
            <person name="Tomlinson C."/>
            <person name="Dauphin-Kohlberg S."/>
            <person name="Kozlowicz-Reilly A."/>
            <person name="Shah N."/>
            <person name="Swearengen-Shahid S."/>
            <person name="Snider J."/>
            <person name="Strong J.T."/>
            <person name="Thompson J."/>
            <person name="Yoakum M."/>
            <person name="Leonard S."/>
            <person name="Pearman C."/>
            <person name="Trani L."/>
            <person name="Radionenko M."/>
            <person name="Waligorski J.E."/>
            <person name="Wang C."/>
            <person name="Rock S.M."/>
            <person name="Tin-Wollam A.-M."/>
            <person name="Maupin R."/>
            <person name="Latreille P."/>
            <person name="Wendl M.C."/>
            <person name="Yang S.-P."/>
            <person name="Pohl C."/>
            <person name="Wallis J.W."/>
            <person name="Spieth J."/>
            <person name="Bieri T.A."/>
            <person name="Berkowicz N."/>
            <person name="Nelson J.O."/>
            <person name="Osborne J."/>
            <person name="Ding L."/>
            <person name="Meyer R."/>
            <person name="Sabo A."/>
            <person name="Shotland Y."/>
            <person name="Sinha P."/>
            <person name="Wohldmann P.E."/>
            <person name="Cook L.L."/>
            <person name="Hickenbotham M.T."/>
            <person name="Eldred J."/>
            <person name="Williams D."/>
            <person name="Jones T.A."/>
            <person name="She X."/>
            <person name="Ciccarelli F.D."/>
            <person name="Izaurralde E."/>
            <person name="Taylor J."/>
            <person name="Schmutz J."/>
            <person name="Myers R.M."/>
            <person name="Cox D.R."/>
            <person name="Huang X."/>
            <person name="McPherson J.D."/>
            <person name="Mardis E.R."/>
            <person name="Clifton S.W."/>
            <person name="Warren W.C."/>
            <person name="Chinwalla A.T."/>
            <person name="Eddy S.R."/>
            <person name="Marra M.A."/>
            <person name="Ovcharenko I."/>
            <person name="Furey T.S."/>
            <person name="Miller W."/>
            <person name="Eichler E.E."/>
            <person name="Bork P."/>
            <person name="Suyama M."/>
            <person name="Torrents D."/>
            <person name="Waterston R.H."/>
            <person name="Wilson R.K."/>
        </authorList>
    </citation>
    <scope>NUCLEOTIDE SEQUENCE [LARGE SCALE GENOMIC DNA]</scope>
</reference>
<reference key="7">
    <citation type="journal article" date="1999" name="FEBS Lett.">
        <title>Identification of novel interaction partners for the conserved membrane proximal region of alpha-integrin cytoplasmic domains.</title>
        <authorList>
            <person name="Wixler V."/>
            <person name="Laplantine E."/>
            <person name="Geerts D."/>
            <person name="Sonnenberg A."/>
            <person name="Petersohn D."/>
            <person name="Eckes B."/>
            <person name="Paulsson M."/>
            <person name="Aumailley M."/>
        </authorList>
    </citation>
    <scope>NUCLEOTIDE SEQUENCE [MRNA] OF 479-1251 (ISOFORM 2)</scope>
    <scope>INTERACTION WITH ITGA3</scope>
    <source>
        <tissue>Placenta</tissue>
    </source>
</reference>
<reference key="8">
    <citation type="journal article" date="2003" name="J. Biol. Chem.">
        <title>Structure and enzymatic properties of a stable complex of the human REV1 and REV7 proteins.</title>
        <authorList>
            <person name="Masuda Y."/>
            <person name="Ohmae M."/>
            <person name="Masuda K."/>
            <person name="Kamiya K."/>
        </authorList>
    </citation>
    <scope>INTERACTION WITH MAD2L2</scope>
</reference>
<reference key="9">
    <citation type="journal article" date="2009" name="Anal. Chem.">
        <title>Lys-N and trypsin cover complementary parts of the phosphoproteome in a refined SCX-based approach.</title>
        <authorList>
            <person name="Gauci S."/>
            <person name="Helbig A.O."/>
            <person name="Slijper M."/>
            <person name="Krijgsveld J."/>
            <person name="Heck A.J."/>
            <person name="Mohammed S."/>
        </authorList>
    </citation>
    <scope>IDENTIFICATION BY MASS SPECTROMETRY [LARGE SCALE ANALYSIS]</scope>
</reference>
<reference key="10">
    <citation type="journal article" date="2010" name="J. Biol. Chem.">
        <title>Crystal structure of human REV7 in complex with a human REV3 fragment and structural implication of the interaction between DNA polymerase zeta and REV1.</title>
        <authorList>
            <person name="Hara K."/>
            <person name="Hashimoto H."/>
            <person name="Murakumo Y."/>
            <person name="Kobayashi S."/>
            <person name="Kogame T."/>
            <person name="Unzai S."/>
            <person name="Akashi S."/>
            <person name="Takeda S."/>
            <person name="Shimizu T."/>
            <person name="Sato M."/>
        </authorList>
    </citation>
    <scope>INTERACTION WITH DNA POLYMERASE ZETA</scope>
</reference>
<reference key="11">
    <citation type="journal article" date="2012" name="Nat. Struct. Mol. Biol.">
        <title>Regulation of Rev1 by the Fanconi anemia core complex.</title>
        <authorList>
            <person name="Kim H."/>
            <person name="Yang K."/>
            <person name="Dejsuphong D."/>
            <person name="D'Andrea A.D."/>
        </authorList>
    </citation>
    <scope>FUNCTION</scope>
    <scope>INTERACTION WITH C1ORF86</scope>
</reference>
<reference key="12">
    <citation type="submission" date="2007-08" db="PDB data bank">
        <title>Solution structure of the BRCT domain from human DNA repair protein REV1.</title>
        <authorList>
            <consortium name="RIKEN structural genomics initiative (RSGI)"/>
        </authorList>
    </citation>
    <scope>STRUCTURE BY NMR OF 43-133</scope>
</reference>
<dbReference type="EC" id="2.7.7.-"/>
<dbReference type="EMBL" id="AF151538">
    <property type="protein sequence ID" value="AAF06731.1"/>
    <property type="molecule type" value="mRNA"/>
</dbReference>
<dbReference type="EMBL" id="AF206019">
    <property type="protein sequence ID" value="AAF18986.1"/>
    <property type="molecule type" value="mRNA"/>
</dbReference>
<dbReference type="EMBL" id="AB047646">
    <property type="protein sequence ID" value="BAB21441.1"/>
    <property type="molecule type" value="mRNA"/>
</dbReference>
<dbReference type="EMBL" id="AF357886">
    <property type="protein sequence ID" value="AAK43708.1"/>
    <property type="status" value="ALT_INIT"/>
    <property type="molecule type" value="mRNA"/>
</dbReference>
<dbReference type="EMBL" id="AK002087">
    <property type="protein sequence ID" value="BAA92079.1"/>
    <property type="molecule type" value="mRNA"/>
</dbReference>
<dbReference type="EMBL" id="AC018690">
    <property type="protein sequence ID" value="AAY24314.1"/>
    <property type="molecule type" value="Genomic_DNA"/>
</dbReference>
<dbReference type="EMBL" id="AJ131720">
    <property type="protein sequence ID" value="CAB38231.1"/>
    <property type="molecule type" value="mRNA"/>
</dbReference>
<dbReference type="CCDS" id="CCDS2045.1">
    <molecule id="Q9UBZ9-1"/>
</dbReference>
<dbReference type="CCDS" id="CCDS42722.1">
    <molecule id="Q9UBZ9-2"/>
</dbReference>
<dbReference type="RefSeq" id="NP_001032961.1">
    <molecule id="Q9UBZ9-2"/>
    <property type="nucleotide sequence ID" value="NM_001037872.3"/>
</dbReference>
<dbReference type="RefSeq" id="NP_001308383.1">
    <property type="nucleotide sequence ID" value="NM_001321454.1"/>
</dbReference>
<dbReference type="RefSeq" id="NP_001308384.1">
    <property type="nucleotide sequence ID" value="NM_001321455.1"/>
</dbReference>
<dbReference type="RefSeq" id="NP_001308387.1">
    <property type="nucleotide sequence ID" value="NM_001321458.1"/>
</dbReference>
<dbReference type="RefSeq" id="NP_001308388.1">
    <property type="nucleotide sequence ID" value="NM_001321459.1"/>
</dbReference>
<dbReference type="RefSeq" id="NP_001308389.1">
    <property type="nucleotide sequence ID" value="NM_001321460.1"/>
</dbReference>
<dbReference type="RefSeq" id="NP_057400.1">
    <molecule id="Q9UBZ9-1"/>
    <property type="nucleotide sequence ID" value="NM_016316.4"/>
</dbReference>
<dbReference type="RefSeq" id="XP_047300677.1">
    <molecule id="Q9UBZ9-1"/>
    <property type="nucleotide sequence ID" value="XM_047444721.1"/>
</dbReference>
<dbReference type="RefSeq" id="XP_047300679.1">
    <molecule id="Q9UBZ9-2"/>
    <property type="nucleotide sequence ID" value="XM_047444723.1"/>
</dbReference>
<dbReference type="RefSeq" id="XP_054198488.1">
    <molecule id="Q9UBZ9-1"/>
    <property type="nucleotide sequence ID" value="XM_054342513.1"/>
</dbReference>
<dbReference type="RefSeq" id="XP_054198489.1">
    <molecule id="Q9UBZ9-2"/>
    <property type="nucleotide sequence ID" value="XM_054342514.1"/>
</dbReference>
<dbReference type="PDB" id="2EBW">
    <property type="method" value="NMR"/>
    <property type="chains" value="A=44-133"/>
</dbReference>
<dbReference type="PDB" id="2LSI">
    <property type="method" value="NMR"/>
    <property type="chains" value="A=1156-1251"/>
</dbReference>
<dbReference type="PDB" id="2LSK">
    <property type="method" value="NMR"/>
    <property type="chains" value="A=1158-1251"/>
</dbReference>
<dbReference type="PDB" id="2LSY">
    <property type="method" value="NMR"/>
    <property type="chains" value="A=1158-1251"/>
</dbReference>
<dbReference type="PDB" id="2N1G">
    <property type="method" value="NMR"/>
    <property type="chains" value="A=1158-1251"/>
</dbReference>
<dbReference type="PDB" id="3GQC">
    <property type="method" value="X-ray"/>
    <property type="resolution" value="2.50 A"/>
    <property type="chains" value="A/B/C/D=330-833"/>
</dbReference>
<dbReference type="PDB" id="3VU7">
    <property type="method" value="X-ray"/>
    <property type="resolution" value="2.80 A"/>
    <property type="chains" value="H=1140-1251"/>
</dbReference>
<dbReference type="PDB" id="4BA9">
    <property type="method" value="X-ray"/>
    <property type="resolution" value="2.73 A"/>
    <property type="chains" value="A/B/C/D/E/F=1158-1242"/>
</dbReference>
<dbReference type="PDB" id="4EXT">
    <property type="method" value="X-ray"/>
    <property type="resolution" value="1.90 A"/>
    <property type="chains" value="A=1156-1251"/>
</dbReference>
<dbReference type="PDB" id="4GK0">
    <property type="method" value="X-ray"/>
    <property type="resolution" value="2.70 A"/>
    <property type="chains" value="E/F=1117-1251"/>
</dbReference>
<dbReference type="PDB" id="4GK5">
    <property type="method" value="X-ray"/>
    <property type="resolution" value="3.21 A"/>
    <property type="chains" value="E/F=1117-1251"/>
</dbReference>
<dbReference type="PDB" id="5VZM">
    <property type="method" value="NMR"/>
    <property type="chains" value="B=933-1040"/>
</dbReference>
<dbReference type="PDB" id="6ASR">
    <property type="method" value="X-ray"/>
    <property type="resolution" value="2.36 A"/>
    <property type="chains" value="B=998-1040"/>
</dbReference>
<dbReference type="PDB" id="6AXD">
    <property type="method" value="NMR"/>
    <property type="chains" value="A=998-1040"/>
</dbReference>
<dbReference type="PDB" id="6WS0">
    <property type="method" value="X-ray"/>
    <property type="resolution" value="2.24 A"/>
    <property type="chains" value="HHH=1158-1251"/>
</dbReference>
<dbReference type="PDB" id="6WS5">
    <property type="method" value="X-ray"/>
    <property type="resolution" value="2.47 A"/>
    <property type="chains" value="HHH=1158-1251"/>
</dbReference>
<dbReference type="PDBsum" id="2EBW"/>
<dbReference type="PDBsum" id="2LSI"/>
<dbReference type="PDBsum" id="2LSK"/>
<dbReference type="PDBsum" id="2LSY"/>
<dbReference type="PDBsum" id="2N1G"/>
<dbReference type="PDBsum" id="3GQC"/>
<dbReference type="PDBsum" id="3VU7"/>
<dbReference type="PDBsum" id="4BA9"/>
<dbReference type="PDBsum" id="4EXT"/>
<dbReference type="PDBsum" id="4GK0"/>
<dbReference type="PDBsum" id="4GK5"/>
<dbReference type="PDBsum" id="5VZM"/>
<dbReference type="PDBsum" id="6ASR"/>
<dbReference type="PDBsum" id="6AXD"/>
<dbReference type="PDBsum" id="6WS0"/>
<dbReference type="PDBsum" id="6WS5"/>
<dbReference type="BMRB" id="Q9UBZ9"/>
<dbReference type="SMR" id="Q9UBZ9"/>
<dbReference type="BioGRID" id="119551">
    <property type="interactions" value="36"/>
</dbReference>
<dbReference type="CORUM" id="Q9UBZ9"/>
<dbReference type="FunCoup" id="Q9UBZ9">
    <property type="interactions" value="2389"/>
</dbReference>
<dbReference type="IntAct" id="Q9UBZ9">
    <property type="interactions" value="9"/>
</dbReference>
<dbReference type="MINT" id="Q9UBZ9"/>
<dbReference type="STRING" id="9606.ENSP00000258428"/>
<dbReference type="BindingDB" id="Q9UBZ9"/>
<dbReference type="ChEMBL" id="CHEMBL4295973"/>
<dbReference type="CarbonylDB" id="Q9UBZ9"/>
<dbReference type="GlyGen" id="Q9UBZ9">
    <property type="glycosylation" value="1 site, 1 O-linked glycan (1 site)"/>
</dbReference>
<dbReference type="iPTMnet" id="Q9UBZ9"/>
<dbReference type="PhosphoSitePlus" id="Q9UBZ9"/>
<dbReference type="BioMuta" id="REV1"/>
<dbReference type="DMDM" id="59798439"/>
<dbReference type="jPOST" id="Q9UBZ9"/>
<dbReference type="MassIVE" id="Q9UBZ9"/>
<dbReference type="PaxDb" id="9606-ENSP00000258428"/>
<dbReference type="PeptideAtlas" id="Q9UBZ9"/>
<dbReference type="ProteomicsDB" id="84105">
    <molecule id="Q9UBZ9-1"/>
</dbReference>
<dbReference type="ProteomicsDB" id="84106">
    <molecule id="Q9UBZ9-2"/>
</dbReference>
<dbReference type="ProteomicsDB" id="84107">
    <molecule id="Q9UBZ9-3"/>
</dbReference>
<dbReference type="Antibodypedia" id="32824">
    <property type="antibodies" value="172 antibodies from 28 providers"/>
</dbReference>
<dbReference type="DNASU" id="51455"/>
<dbReference type="Ensembl" id="ENST00000258428.8">
    <molecule id="Q9UBZ9-1"/>
    <property type="protein sequence ID" value="ENSP00000258428.3"/>
    <property type="gene ID" value="ENSG00000135945.10"/>
</dbReference>
<dbReference type="Ensembl" id="ENST00000393445.7">
    <molecule id="Q9UBZ9-2"/>
    <property type="protein sequence ID" value="ENSP00000377091.3"/>
    <property type="gene ID" value="ENSG00000135945.10"/>
</dbReference>
<dbReference type="GeneID" id="51455"/>
<dbReference type="KEGG" id="hsa:51455"/>
<dbReference type="MANE-Select" id="ENST00000258428.8">
    <property type="protein sequence ID" value="ENSP00000258428.3"/>
    <property type="RefSeq nucleotide sequence ID" value="NM_016316.4"/>
    <property type="RefSeq protein sequence ID" value="NP_057400.1"/>
</dbReference>
<dbReference type="UCSC" id="uc002tac.4">
    <molecule id="Q9UBZ9-1"/>
    <property type="organism name" value="human"/>
</dbReference>
<dbReference type="AGR" id="HGNC:14060"/>
<dbReference type="CTD" id="51455"/>
<dbReference type="DisGeNET" id="51455"/>
<dbReference type="GeneCards" id="REV1"/>
<dbReference type="HGNC" id="HGNC:14060">
    <property type="gene designation" value="REV1"/>
</dbReference>
<dbReference type="HPA" id="ENSG00000135945">
    <property type="expression patterns" value="Low tissue specificity"/>
</dbReference>
<dbReference type="MIM" id="606134">
    <property type="type" value="gene"/>
</dbReference>
<dbReference type="neXtProt" id="NX_Q9UBZ9"/>
<dbReference type="OpenTargets" id="ENSG00000135945"/>
<dbReference type="PharmGKB" id="PA162401120"/>
<dbReference type="VEuPathDB" id="HostDB:ENSG00000135945"/>
<dbReference type="eggNOG" id="KOG2093">
    <property type="taxonomic scope" value="Eukaryota"/>
</dbReference>
<dbReference type="GeneTree" id="ENSGT00940000156374"/>
<dbReference type="HOGENOM" id="CLU_003901_0_1_1"/>
<dbReference type="InParanoid" id="Q9UBZ9"/>
<dbReference type="OMA" id="IKNGMWM"/>
<dbReference type="OrthoDB" id="427711at2759"/>
<dbReference type="PAN-GO" id="Q9UBZ9">
    <property type="GO annotations" value="4 GO annotations based on evolutionary models"/>
</dbReference>
<dbReference type="PhylomeDB" id="Q9UBZ9"/>
<dbReference type="TreeFam" id="TF314488"/>
<dbReference type="PathwayCommons" id="Q9UBZ9"/>
<dbReference type="Reactome" id="R-HSA-110312">
    <property type="pathway name" value="Translesion synthesis by REV1"/>
</dbReference>
<dbReference type="Reactome" id="R-HSA-5655862">
    <property type="pathway name" value="Translesion synthesis by POLK"/>
</dbReference>
<dbReference type="Reactome" id="R-HSA-5656121">
    <property type="pathway name" value="Translesion synthesis by POLI"/>
</dbReference>
<dbReference type="Reactome" id="R-HSA-5656169">
    <property type="pathway name" value="Termination of translesion DNA synthesis"/>
</dbReference>
<dbReference type="SignaLink" id="Q9UBZ9"/>
<dbReference type="SIGNOR" id="Q9UBZ9"/>
<dbReference type="BioGRID-ORCS" id="51455">
    <property type="hits" value="76 hits in 1154 CRISPR screens"/>
</dbReference>
<dbReference type="ChiTaRS" id="REV1">
    <property type="organism name" value="human"/>
</dbReference>
<dbReference type="EvolutionaryTrace" id="Q9UBZ9"/>
<dbReference type="GeneWiki" id="REV1"/>
<dbReference type="GenomeRNAi" id="51455"/>
<dbReference type="Pharos" id="Q9UBZ9">
    <property type="development level" value="Tbio"/>
</dbReference>
<dbReference type="PRO" id="PR:Q9UBZ9"/>
<dbReference type="Proteomes" id="UP000005640">
    <property type="component" value="Chromosome 2"/>
</dbReference>
<dbReference type="RNAct" id="Q9UBZ9">
    <property type="molecule type" value="protein"/>
</dbReference>
<dbReference type="Bgee" id="ENSG00000135945">
    <property type="expression patterns" value="Expressed in secondary oocyte and 195 other cell types or tissues"/>
</dbReference>
<dbReference type="ExpressionAtlas" id="Q9UBZ9">
    <property type="expression patterns" value="baseline and differential"/>
</dbReference>
<dbReference type="GO" id="GO:0005654">
    <property type="term" value="C:nucleoplasm"/>
    <property type="evidence" value="ECO:0000304"/>
    <property type="project" value="Reactome"/>
</dbReference>
<dbReference type="GO" id="GO:0003684">
    <property type="term" value="F:damaged DNA binding"/>
    <property type="evidence" value="ECO:0000304"/>
    <property type="project" value="ProtInc"/>
</dbReference>
<dbReference type="GO" id="GO:0017125">
    <property type="term" value="F:deoxycytidyl transferase activity"/>
    <property type="evidence" value="ECO:0000318"/>
    <property type="project" value="GO_Central"/>
</dbReference>
<dbReference type="GO" id="GO:0003887">
    <property type="term" value="F:DNA-directed DNA polymerase activity"/>
    <property type="evidence" value="ECO:0000318"/>
    <property type="project" value="GO_Central"/>
</dbReference>
<dbReference type="GO" id="GO:0046872">
    <property type="term" value="F:metal ion binding"/>
    <property type="evidence" value="ECO:0007669"/>
    <property type="project" value="UniProtKB-KW"/>
</dbReference>
<dbReference type="GO" id="GO:0006260">
    <property type="term" value="P:DNA replication"/>
    <property type="evidence" value="ECO:0000304"/>
    <property type="project" value="ProtInc"/>
</dbReference>
<dbReference type="GO" id="GO:0070987">
    <property type="term" value="P:error-free translesion synthesis"/>
    <property type="evidence" value="ECO:0000318"/>
    <property type="project" value="GO_Central"/>
</dbReference>
<dbReference type="GO" id="GO:0042276">
    <property type="term" value="P:error-prone translesion synthesis"/>
    <property type="evidence" value="ECO:0000318"/>
    <property type="project" value="GO_Central"/>
</dbReference>
<dbReference type="GO" id="GO:0009411">
    <property type="term" value="P:response to UV"/>
    <property type="evidence" value="ECO:0000314"/>
    <property type="project" value="UniProtKB"/>
</dbReference>
<dbReference type="CDD" id="cd17719">
    <property type="entry name" value="BRCT_Rev1"/>
    <property type="match status" value="1"/>
</dbReference>
<dbReference type="CDD" id="cd01701">
    <property type="entry name" value="PolY_Rev1"/>
    <property type="match status" value="1"/>
</dbReference>
<dbReference type="CDD" id="cd12145">
    <property type="entry name" value="Rev1_C"/>
    <property type="match status" value="1"/>
</dbReference>
<dbReference type="CDD" id="cd19318">
    <property type="entry name" value="Rev1_UBM2"/>
    <property type="match status" value="2"/>
</dbReference>
<dbReference type="FunFam" id="1.10.150.20:FF:000025">
    <property type="entry name" value="DNA repair protein REV1"/>
    <property type="match status" value="1"/>
</dbReference>
<dbReference type="FunFam" id="1.20.58.1280:FF:000001">
    <property type="entry name" value="DNA repair protein REV1"/>
    <property type="match status" value="1"/>
</dbReference>
<dbReference type="FunFam" id="3.30.1490.100:FF:000001">
    <property type="entry name" value="DNA repair protein REV1"/>
    <property type="match status" value="1"/>
</dbReference>
<dbReference type="FunFam" id="3.30.70.270:FF:000005">
    <property type="entry name" value="DNA repair protein REV1"/>
    <property type="match status" value="1"/>
</dbReference>
<dbReference type="FunFam" id="3.30.70.270:FF:000010">
    <property type="entry name" value="DNA repair protein REV1"/>
    <property type="match status" value="1"/>
</dbReference>
<dbReference type="FunFam" id="3.40.1170.60:FF:000005">
    <property type="entry name" value="DNA repair protein REV1"/>
    <property type="match status" value="1"/>
</dbReference>
<dbReference type="FunFam" id="3.40.50.10190:FF:000009">
    <property type="entry name" value="DNA repair protein REV1"/>
    <property type="match status" value="1"/>
</dbReference>
<dbReference type="Gene3D" id="3.30.70.270">
    <property type="match status" value="2"/>
</dbReference>
<dbReference type="Gene3D" id="3.40.1170.60">
    <property type="match status" value="1"/>
</dbReference>
<dbReference type="Gene3D" id="6.10.250.1490">
    <property type="match status" value="1"/>
</dbReference>
<dbReference type="Gene3D" id="6.10.250.1630">
    <property type="match status" value="1"/>
</dbReference>
<dbReference type="Gene3D" id="1.10.150.20">
    <property type="entry name" value="5' to 3' exonuclease, C-terminal subdomain"/>
    <property type="match status" value="1"/>
</dbReference>
<dbReference type="Gene3D" id="3.40.50.10190">
    <property type="entry name" value="BRCT domain"/>
    <property type="match status" value="1"/>
</dbReference>
<dbReference type="Gene3D" id="3.30.1490.100">
    <property type="entry name" value="DNA polymerase, Y-family, little finger domain"/>
    <property type="match status" value="1"/>
</dbReference>
<dbReference type="Gene3D" id="1.20.58.1280">
    <property type="entry name" value="DNA repair protein Rev1, C-terminal domain"/>
    <property type="match status" value="1"/>
</dbReference>
<dbReference type="IDEAL" id="IID00284"/>
<dbReference type="InterPro" id="IPR001357">
    <property type="entry name" value="BRCT_dom"/>
</dbReference>
<dbReference type="InterPro" id="IPR036420">
    <property type="entry name" value="BRCT_dom_sf"/>
</dbReference>
<dbReference type="InterPro" id="IPR043502">
    <property type="entry name" value="DNA/RNA_pol_sf"/>
</dbReference>
<dbReference type="InterPro" id="IPR036775">
    <property type="entry name" value="DNA_pol_Y-fam_lit_finger_sf"/>
</dbReference>
<dbReference type="InterPro" id="IPR017961">
    <property type="entry name" value="DNA_pol_Y-fam_little_finger"/>
</dbReference>
<dbReference type="InterPro" id="IPR025527">
    <property type="entry name" value="HUWE1/Rev1_UBM"/>
</dbReference>
<dbReference type="InterPro" id="IPR053848">
    <property type="entry name" value="IMS_HHH_1"/>
</dbReference>
<dbReference type="InterPro" id="IPR012112">
    <property type="entry name" value="REV1"/>
</dbReference>
<dbReference type="InterPro" id="IPR031991">
    <property type="entry name" value="Rev1_C"/>
</dbReference>
<dbReference type="InterPro" id="IPR038401">
    <property type="entry name" value="Rev1_C_sf"/>
</dbReference>
<dbReference type="InterPro" id="IPR047346">
    <property type="entry name" value="Rev1_UBM1/2"/>
</dbReference>
<dbReference type="InterPro" id="IPR043128">
    <property type="entry name" value="Rev_trsase/Diguanyl_cyclase"/>
</dbReference>
<dbReference type="InterPro" id="IPR001126">
    <property type="entry name" value="UmuC"/>
</dbReference>
<dbReference type="PANTHER" id="PTHR45990">
    <property type="entry name" value="DNA REPAIR PROTEIN REV1"/>
    <property type="match status" value="1"/>
</dbReference>
<dbReference type="PANTHER" id="PTHR45990:SF1">
    <property type="entry name" value="DNA REPAIR PROTEIN REV1"/>
    <property type="match status" value="1"/>
</dbReference>
<dbReference type="Pfam" id="PF00533">
    <property type="entry name" value="BRCT"/>
    <property type="match status" value="1"/>
</dbReference>
<dbReference type="Pfam" id="PF00817">
    <property type="entry name" value="IMS"/>
    <property type="match status" value="2"/>
</dbReference>
<dbReference type="Pfam" id="PF11799">
    <property type="entry name" value="IMS_C"/>
    <property type="match status" value="1"/>
</dbReference>
<dbReference type="Pfam" id="PF21999">
    <property type="entry name" value="IMS_HHH_1"/>
    <property type="match status" value="1"/>
</dbReference>
<dbReference type="Pfam" id="PF16727">
    <property type="entry name" value="REV1_C"/>
    <property type="match status" value="1"/>
</dbReference>
<dbReference type="Pfam" id="PF14377">
    <property type="entry name" value="UBM"/>
    <property type="match status" value="2"/>
</dbReference>
<dbReference type="PIRSF" id="PIRSF036573">
    <property type="entry name" value="REV1"/>
    <property type="match status" value="1"/>
</dbReference>
<dbReference type="SMART" id="SM00292">
    <property type="entry name" value="BRCT"/>
    <property type="match status" value="1"/>
</dbReference>
<dbReference type="SUPFAM" id="SSF52113">
    <property type="entry name" value="BRCT domain"/>
    <property type="match status" value="1"/>
</dbReference>
<dbReference type="SUPFAM" id="SSF56672">
    <property type="entry name" value="DNA/RNA polymerases"/>
    <property type="match status" value="1"/>
</dbReference>
<dbReference type="SUPFAM" id="SSF100879">
    <property type="entry name" value="Lesion bypass DNA polymerase (Y-family), little finger domain"/>
    <property type="match status" value="1"/>
</dbReference>
<dbReference type="PROSITE" id="PS50172">
    <property type="entry name" value="BRCT"/>
    <property type="match status" value="1"/>
</dbReference>
<dbReference type="PROSITE" id="PS50173">
    <property type="entry name" value="UMUC"/>
    <property type="match status" value="1"/>
</dbReference>
<proteinExistence type="evidence at protein level"/>
<feature type="chain" id="PRO_0000173992" description="DNA repair protein REV1">
    <location>
        <begin position="1"/>
        <end position="1251"/>
    </location>
</feature>
<feature type="domain" description="BRCT" evidence="3">
    <location>
        <begin position="44"/>
        <end position="131"/>
    </location>
</feature>
<feature type="domain" description="UmuC" evidence="4">
    <location>
        <begin position="419"/>
        <end position="653"/>
    </location>
</feature>
<feature type="region of interest" description="Disordered" evidence="5">
    <location>
        <begin position="206"/>
        <end position="236"/>
    </location>
</feature>
<feature type="region of interest" description="Disordered" evidence="5">
    <location>
        <begin position="282"/>
        <end position="342"/>
    </location>
</feature>
<feature type="region of interest" description="Interaction with target DNA" evidence="1">
    <location>
        <begin position="352"/>
        <end position="362"/>
    </location>
</feature>
<feature type="region of interest" description="Interaction with target DNA" evidence="1">
    <location>
        <begin position="653"/>
        <end position="656"/>
    </location>
</feature>
<feature type="region of interest" description="Interaction with target DNA" evidence="1">
    <location>
        <begin position="709"/>
        <end position="717"/>
    </location>
</feature>
<feature type="region of interest" description="Disordered" evidence="5">
    <location>
        <begin position="1035"/>
        <end position="1096"/>
    </location>
</feature>
<feature type="region of interest" description="Disordered" evidence="5">
    <location>
        <begin position="1119"/>
        <end position="1147"/>
    </location>
</feature>
<feature type="region of interest" description="Protein interaction domain; mediates interaction with DNA polymerase zeta">
    <location>
        <begin position="1150"/>
        <end position="1249"/>
    </location>
</feature>
<feature type="short sequence motif" description="Nuclear localization signal" evidence="2">
    <location>
        <begin position="1071"/>
        <end position="1078"/>
    </location>
</feature>
<feature type="compositionally biased region" description="Polar residues" evidence="5">
    <location>
        <begin position="282"/>
        <end position="320"/>
    </location>
</feature>
<feature type="compositionally biased region" description="Low complexity" evidence="5">
    <location>
        <begin position="321"/>
        <end position="342"/>
    </location>
</feature>
<feature type="compositionally biased region" description="Polar residues" evidence="5">
    <location>
        <begin position="1043"/>
        <end position="1056"/>
    </location>
</feature>
<feature type="compositionally biased region" description="Basic residues" evidence="5">
    <location>
        <begin position="1070"/>
        <end position="1079"/>
    </location>
</feature>
<feature type="compositionally biased region" description="Basic and acidic residues" evidence="5">
    <location>
        <begin position="1119"/>
        <end position="1129"/>
    </location>
</feature>
<feature type="compositionally biased region" description="Polar residues" evidence="5">
    <location>
        <begin position="1132"/>
        <end position="1146"/>
    </location>
</feature>
<feature type="binding site" evidence="1">
    <location>
        <position position="357"/>
    </location>
    <ligand>
        <name>dCTP</name>
        <dbReference type="ChEBI" id="CHEBI:61481"/>
    </ligand>
</feature>
<feature type="binding site" evidence="1">
    <location>
        <begin position="423"/>
        <end position="427"/>
    </location>
    <ligand>
        <name>dCTP</name>
        <dbReference type="ChEBI" id="CHEBI:61481"/>
    </ligand>
</feature>
<feature type="binding site" evidence="4">
    <location>
        <position position="423"/>
    </location>
    <ligand>
        <name>Mg(2+)</name>
        <dbReference type="ChEBI" id="CHEBI:18420"/>
        <label>1</label>
    </ligand>
</feature>
<feature type="binding site" evidence="4">
    <location>
        <position position="423"/>
    </location>
    <ligand>
        <name>Mg(2+)</name>
        <dbReference type="ChEBI" id="CHEBI:18420"/>
        <label>2</label>
    </ligand>
</feature>
<feature type="binding site" evidence="1">
    <location>
        <begin position="510"/>
        <end position="516"/>
    </location>
    <ligand>
        <name>dCTP</name>
        <dbReference type="ChEBI" id="CHEBI:61481"/>
    </ligand>
</feature>
<feature type="binding site" evidence="1">
    <location>
        <position position="522"/>
    </location>
    <ligand>
        <name>dCTP</name>
        <dbReference type="ChEBI" id="CHEBI:61481"/>
    </ligand>
</feature>
<feature type="binding site" evidence="1">
    <location>
        <position position="570"/>
    </location>
    <ligand>
        <name>dCTP</name>
        <dbReference type="ChEBI" id="CHEBI:61481"/>
    </ligand>
</feature>
<feature type="binding site" evidence="4">
    <location>
        <position position="570"/>
    </location>
    <ligand>
        <name>Mg(2+)</name>
        <dbReference type="ChEBI" id="CHEBI:18420"/>
        <label>1</label>
    </ligand>
</feature>
<feature type="binding site" evidence="4">
    <location>
        <position position="571"/>
    </location>
    <ligand>
        <name>Mg(2+)</name>
        <dbReference type="ChEBI" id="CHEBI:18420"/>
        <label>1</label>
    </ligand>
</feature>
<feature type="site" description="Interaction with target DNA" evidence="1">
    <location>
        <position position="770"/>
    </location>
</feature>
<feature type="site" description="Interaction with target DNA" evidence="1">
    <location>
        <position position="783"/>
    </location>
</feature>
<feature type="splice variant" id="VSP_012809" description="In isoform 3." evidence="16">
    <location>
        <begin position="1"/>
        <end position="21"/>
    </location>
</feature>
<feature type="splice variant" id="VSP_012810" description="In isoform 3." evidence="16">
    <original>DMSVLNSP</original>
    <variation>RYLLKLSS</variation>
    <location>
        <begin position="406"/>
        <end position="413"/>
    </location>
</feature>
<feature type="splice variant" id="VSP_012811" description="In isoform 3." evidence="16">
    <location>
        <begin position="414"/>
        <end position="1251"/>
    </location>
</feature>
<feature type="splice variant" id="VSP_012812" description="In isoform 2." evidence="14 15">
    <location>
        <position position="479"/>
    </location>
</feature>
<feature type="sequence variant" id="VAR_021249" description="In dbSNP:rs3087403.">
    <original>V</original>
    <variation>M</variation>
    <location>
        <position position="138"/>
    </location>
</feature>
<feature type="sequence variant" id="VAR_021250" description="In dbSNP:rs3087386.">
    <original>F</original>
    <variation>S</variation>
    <location>
        <position position="257"/>
    </location>
</feature>
<feature type="sequence variant" id="VAR_029193" description="In dbSNP:rs28382882.">
    <original>N</original>
    <variation>D</variation>
    <location>
        <position position="306"/>
    </location>
</feature>
<feature type="sequence variant" id="VAR_021251" description="In dbSNP:rs3087399.">
    <original>N</original>
    <variation>S</variation>
    <location>
        <position position="373"/>
    </location>
</feature>
<feature type="sequence variant" id="VAR_029194" description="In dbSNP:rs3087394.">
    <original>M</original>
    <variation>V</variation>
    <location>
        <position position="656"/>
    </location>
</feature>
<feature type="sequence variant" id="VAR_029195" description="In dbSNP:rs3087398.">
    <original>L</original>
    <variation>W</variation>
    <location>
        <position position="660"/>
    </location>
</feature>
<feature type="sequence variant" id="VAR_029196" description="In dbSNP:rs28382941.">
    <original>D</original>
    <variation>N</variation>
    <location>
        <position position="700"/>
    </location>
</feature>
<feature type="sequence variant" id="VAR_029197" description="In dbSNP:rs28382942.">
    <original>R</original>
    <variation>Q</variation>
    <location>
        <position position="704"/>
    </location>
</feature>
<feature type="sequence variant" id="VAR_029199" description="In dbSNP:rs28382961.">
    <original>P</original>
    <variation>H</variation>
    <location>
        <position position="902"/>
    </location>
</feature>
<feature type="sequence variant" id="VAR_029198" description="In dbSNP:rs28382960.">
    <original>P</original>
    <variation>S</variation>
    <location>
        <position position="902"/>
    </location>
</feature>
<feature type="sequence variant" id="VAR_029200" description="In dbSNP:rs3087396.">
    <original>S</original>
    <variation>I</variation>
    <location>
        <position position="921"/>
    </location>
</feature>
<feature type="sequence variant" id="VAR_024436" description="In dbSNP:rs3087401.">
    <original>A</original>
    <variation>T</variation>
    <location>
        <position position="1003"/>
    </location>
</feature>
<feature type="sequence variant" id="VAR_029201" description="In dbSNP:rs3087388.">
    <original>P</original>
    <variation>T</variation>
    <location>
        <position position="1060"/>
    </location>
</feature>
<feature type="sequence variant" id="VAR_029202" description="In dbSNP:rs3087393.">
    <original>N</original>
    <variation>K</variation>
    <location>
        <position position="1074"/>
    </location>
</feature>
<feature type="sequence variant" id="VAR_029203" description="In dbSNP:rs3087392.">
    <original>N</original>
    <variation>T</variation>
    <location>
        <position position="1091"/>
    </location>
</feature>
<feature type="sequence variant" id="VAR_029204" description="In dbSNP:rs3087400.">
    <original>L</original>
    <variation>P</variation>
    <location>
        <position position="1102"/>
    </location>
</feature>
<feature type="mutagenesis site" description="Abolishes transferase activity; when associated with A-571." evidence="9">
    <original>D</original>
    <variation>A</variation>
    <location>
        <position position="570"/>
    </location>
</feature>
<feature type="mutagenesis site" description="Abolishes transferase activity; when associated with A-570." evidence="9">
    <original>E</original>
    <variation>A</variation>
    <location>
        <position position="571"/>
    </location>
</feature>
<feature type="turn" evidence="18">
    <location>
        <begin position="48"/>
        <end position="51"/>
    </location>
</feature>
<feature type="strand" evidence="18">
    <location>
        <begin position="53"/>
        <end position="56"/>
    </location>
</feature>
<feature type="helix" evidence="18">
    <location>
        <begin position="64"/>
        <end position="73"/>
    </location>
</feature>
<feature type="strand" evidence="18">
    <location>
        <begin position="84"/>
        <end position="86"/>
    </location>
</feature>
<feature type="strand" evidence="18">
    <location>
        <begin position="89"/>
        <end position="91"/>
    </location>
</feature>
<feature type="helix" evidence="18">
    <location>
        <begin position="99"/>
        <end position="102"/>
    </location>
</feature>
<feature type="strand" evidence="18">
    <location>
        <begin position="104"/>
        <end position="106"/>
    </location>
</feature>
<feature type="helix" evidence="18">
    <location>
        <begin position="112"/>
        <end position="120"/>
    </location>
</feature>
<feature type="helix" evidence="18">
    <location>
        <begin position="127"/>
        <end position="129"/>
    </location>
</feature>
<feature type="helix" evidence="19">
    <location>
        <begin position="345"/>
        <end position="355"/>
    </location>
</feature>
<feature type="helix" evidence="19">
    <location>
        <begin position="357"/>
        <end position="375"/>
    </location>
</feature>
<feature type="helix" evidence="19">
    <location>
        <begin position="384"/>
        <end position="387"/>
    </location>
</feature>
<feature type="strand" evidence="19">
    <location>
        <begin position="419"/>
        <end position="424"/>
    </location>
</feature>
<feature type="helix" evidence="19">
    <location>
        <begin position="427"/>
        <end position="432"/>
    </location>
</feature>
<feature type="turn" evidence="19">
    <location>
        <begin position="433"/>
        <end position="435"/>
    </location>
</feature>
<feature type="turn" evidence="19">
    <location>
        <begin position="437"/>
        <end position="441"/>
    </location>
</feature>
<feature type="strand" evidence="19">
    <location>
        <begin position="444"/>
        <end position="446"/>
    </location>
</feature>
<feature type="helix" evidence="19">
    <location>
        <begin position="463"/>
        <end position="471"/>
    </location>
</feature>
<feature type="turn" evidence="19">
    <location>
        <begin position="472"/>
        <end position="475"/>
    </location>
</feature>
<feature type="helix" evidence="19">
    <location>
        <begin position="500"/>
        <end position="502"/>
    </location>
</feature>
<feature type="strand" evidence="19">
    <location>
        <begin position="509"/>
        <end position="511"/>
    </location>
</feature>
<feature type="helix" evidence="19">
    <location>
        <begin position="513"/>
        <end position="516"/>
    </location>
</feature>
<feature type="turn" evidence="19">
    <location>
        <begin position="517"/>
        <end position="519"/>
    </location>
</feature>
<feature type="helix" evidence="19">
    <location>
        <begin position="526"/>
        <end position="532"/>
    </location>
</feature>
<feature type="strand" evidence="19">
    <location>
        <begin position="537"/>
        <end position="539"/>
    </location>
</feature>
<feature type="helix" evidence="19">
    <location>
        <begin position="543"/>
        <end position="558"/>
    </location>
</feature>
<feature type="strand" evidence="19">
    <location>
        <begin position="564"/>
        <end position="568"/>
    </location>
</feature>
<feature type="strand" evidence="19">
    <location>
        <begin position="571"/>
        <end position="575"/>
    </location>
</feature>
<feature type="helix" evidence="19">
    <location>
        <begin position="577"/>
        <end position="583"/>
    </location>
</feature>
<feature type="helix" evidence="19">
    <location>
        <begin position="587"/>
        <end position="602"/>
    </location>
</feature>
<feature type="strand" evidence="19">
    <location>
        <begin position="606"/>
        <end position="613"/>
    </location>
</feature>
<feature type="helix" evidence="19">
    <location>
        <begin position="614"/>
        <end position="624"/>
    </location>
</feature>
<feature type="strand" evidence="19">
    <location>
        <begin position="629"/>
        <end position="631"/>
    </location>
</feature>
<feature type="helix" evidence="19">
    <location>
        <begin position="634"/>
        <end position="636"/>
    </location>
</feature>
<feature type="helix" evidence="19">
    <location>
        <begin position="637"/>
        <end position="643"/>
    </location>
</feature>
<feature type="helix" evidence="19">
    <location>
        <begin position="646"/>
        <end position="648"/>
    </location>
</feature>
<feature type="helix" evidence="19">
    <location>
        <begin position="654"/>
        <end position="662"/>
    </location>
</feature>
<feature type="helix" evidence="19">
    <location>
        <begin position="668"/>
        <end position="671"/>
    </location>
</feature>
<feature type="helix" evidence="19">
    <location>
        <begin position="676"/>
        <end position="683"/>
    </location>
</feature>
<feature type="helix" evidence="19">
    <location>
        <begin position="685"/>
        <end position="694"/>
    </location>
</feature>
<feature type="turn" evidence="19">
    <location>
        <begin position="695"/>
        <end position="697"/>
    </location>
</feature>
<feature type="strand" evidence="19">
    <location>
        <begin position="712"/>
        <end position="716"/>
    </location>
</feature>
<feature type="helix" evidence="19">
    <location>
        <begin position="725"/>
        <end position="745"/>
    </location>
</feature>
<feature type="strand" evidence="19">
    <location>
        <begin position="748"/>
        <end position="760"/>
    </location>
</feature>
<feature type="strand" evidence="19">
    <location>
        <begin position="776"/>
        <end position="790"/>
    </location>
</feature>
<feature type="helix" evidence="19">
    <location>
        <begin position="793"/>
        <end position="805"/>
    </location>
</feature>
<feature type="helix" evidence="19">
    <location>
        <begin position="811"/>
        <end position="813"/>
    </location>
</feature>
<feature type="strand" evidence="19">
    <location>
        <begin position="814"/>
        <end position="826"/>
    </location>
</feature>
<feature type="strand" evidence="22">
    <location>
        <begin position="936"/>
        <end position="939"/>
    </location>
</feature>
<feature type="helix" evidence="22">
    <location>
        <begin position="940"/>
        <end position="943"/>
    </location>
</feature>
<feature type="helix" evidence="22">
    <location>
        <begin position="948"/>
        <end position="955"/>
    </location>
</feature>
<feature type="helix" evidence="22">
    <location>
        <begin position="960"/>
        <end position="963"/>
    </location>
</feature>
<feature type="turn" evidence="22">
    <location>
        <begin position="973"/>
        <end position="979"/>
    </location>
</feature>
<feature type="helix" evidence="22">
    <location>
        <begin position="985"/>
        <end position="987"/>
    </location>
</feature>
<feature type="helix" evidence="23">
    <location>
        <begin position="1004"/>
        <end position="1009"/>
    </location>
</feature>
<feature type="helix" evidence="23">
    <location>
        <begin position="1013"/>
        <end position="1015"/>
    </location>
</feature>
<feature type="helix" evidence="23">
    <location>
        <begin position="1018"/>
        <end position="1022"/>
    </location>
</feature>
<feature type="helix" evidence="23">
    <location>
        <begin position="1026"/>
        <end position="1037"/>
    </location>
</feature>
<feature type="strand" evidence="20">
    <location>
        <begin position="1160"/>
        <end position="1162"/>
    </location>
</feature>
<feature type="helix" evidence="21">
    <location>
        <begin position="1165"/>
        <end position="1178"/>
    </location>
</feature>
<feature type="helix" evidence="21">
    <location>
        <begin position="1184"/>
        <end position="1199"/>
    </location>
</feature>
<feature type="helix" evidence="21">
    <location>
        <begin position="1203"/>
        <end position="1218"/>
    </location>
</feature>
<feature type="helix" evidence="21">
    <location>
        <begin position="1223"/>
        <end position="1243"/>
    </location>
</feature>
<feature type="strand" evidence="21">
    <location>
        <begin position="1245"/>
        <end position="1248"/>
    </location>
</feature>
<accession>Q9UBZ9</accession>
<accession>O95941</accession>
<accession>Q53SI7</accession>
<accession>Q9C0J4</accession>
<accession>Q9NUP2</accession>
<name>REV1_HUMAN</name>
<comment type="function">
    <text evidence="7 8 9 10 13">Deoxycytidyl transferase involved in DNA repair. Transfers a dCMP residue from dCTP to the 3'-end of a DNA primer in a template-dependent reaction. May assist in the first step in the bypass of abasic lesions by the insertion of a nucleotide opposite the lesion. Required for normal induction of mutations by physical and chemical agents.</text>
</comment>
<comment type="subunit">
    <text evidence="6 10 11 12 13">Monomer. Interacts with the DNA polymerase zeta which is composed of REV3L and MAD2L2; the interaction with MAD2L2 is direct and requires that REV3L is in its closed conformation. Interacts with POLH, POLI and POLK. May bind ITGA3. Interacts with FAAP20/C1orf86.</text>
</comment>
<comment type="interaction">
    <interactant intactId="EBI-7353917">
        <id>Q9UBZ9</id>
    </interactant>
    <interactant intactId="EBI-2817693">
        <id>Q6NZ36</id>
        <label>FAAP20</label>
    </interactant>
    <organismsDiffer>false</organismsDiffer>
    <experiments>2</experiments>
</comment>
<comment type="subcellular location">
    <subcellularLocation>
        <location evidence="17">Nucleus</location>
    </subcellularLocation>
</comment>
<comment type="alternative products">
    <event type="alternative splicing"/>
    <isoform>
        <id>Q9UBZ9-1</id>
        <name>1</name>
        <name>REV1</name>
        <sequence type="displayed"/>
    </isoform>
    <isoform>
        <id>Q9UBZ9-2</id>
        <name>2</name>
        <name>REV1S</name>
        <sequence type="described" ref="VSP_012812"/>
    </isoform>
    <isoform>
        <id>Q9UBZ9-3</id>
        <name>3</name>
        <sequence type="described" ref="VSP_012809 VSP_012810 VSP_012811"/>
    </isoform>
</comment>
<comment type="tissue specificity">
    <text evidence="7 9 10">Ubiquitous.</text>
</comment>
<comment type="domain">
    <text>The C-terminal domain is necessary for protein interactions.</text>
</comment>
<comment type="similarity">
    <text evidence="17">Belongs to the DNA polymerase type-Y family.</text>
</comment>
<comment type="sequence caution" evidence="17">
    <conflict type="erroneous initiation">
        <sequence resource="EMBL-CDS" id="AAK43708"/>
    </conflict>
</comment>
<gene>
    <name type="primary">REV1</name>
    <name type="synonym">REV1L</name>
</gene>
<sequence length="1251" mass="138248">MRRGGWRKRAENDGWETWGGYMAAKVQKLEEQFRSDAAMQKDGTSSTIFSGVAIYVNGYTDPSAEELRKLMMLHGGQYHVYYSRSKTTHIIATNLPNAKIKELKGEKVIRPEWIVESIKAGRLLSYIPYQLYTKQSSVQKGLSFNPVCRPEDPLPGPSNIAKQLNNRVNHIVKKIETENEVKVNGMNSWNEEDENNDFSFVDLEQTSPGRKQNGIPHPRGSTAIFNGHTPSSNGALKTQDCLVPMVNSVASRLSPAFSQEEDKAEKSSTDFRDCTLQQLQQSTRNTDALRNPHRTNSFSLSPLHSNTKINGAHHSTVQGPSSTKSTSSVSTFSKAAPSVPSKPSDCNFISNFYSHSRLHHISMWKCELTEFVNTLQRQSNGIFPGREKLKKMKTGRSALVVTDTGDMSVLNSPRHQSCIMHVDMDCFFVSVGIRNRPDLKGKPVAVTSNRGTGRAPLRPGANPQLEWQYYQNKILKGKAADIPDSSLWENPDSAQANGIDSVLSRAEIASCSYEARQLGIKNGMFFGHAKQLCPNLQAVPYDFHAYKEVAQTLYETLASYTHNIEAVSCDEALVDITEILAETKLTPDEFANAVRMEIKDQTKCAASVGIGSNILLARMATRKAKPDGQYHLKPEEVDDFIRGQLVTNLPGVGHSMESKLASLGIKTCGDLQYMTMAKLQKEFGPKTGQMLYRFCRGLDDRPVRTEKERKSVSAEINYGIRFTQPKEAEAFLLSLSEEIQRRLEATGMKGKRLTLKIMVRKPGAPVETAKFGGHGICDNIARTVTLDQATDNAKIIGKAMLNMFHTMKLNISDMRGVGIHVNQLVPTNLNPSTCPSRPSVQSSHFPSGSYSVRDVFQVQKAKKSTEEEHKEVFRAAVDLEISSASRTCTFLPPFPAHLPTSPDTNKAESSGKWNGLHTPVSVQSRLNLSIEVPSPSQLDQSVLEALPPDLREQVEQVCAVQQAESHGDKKKEPVNGCNTGILPQPVGTVLLQIPEPQESNSDAGINLIALPAFSQVDPEVFAALPAELQRELKAAYDQRQRQGENSTHQQSASASVPKNPLLHLKAAVKEKKRNKKKKTIGSPKRIQSPLNNKLLNSPAKTLPGACGSPQKLIDGFLKHEGPPAEKPLEELSASTSGVPGLSSLQSDPAGCVRPPAPNLAGAVEFNDVKTLLREWITTISDPMEEDILQVVKYCTDLIEEKDLEKLDLVIKYMKRLMQQSVESVWNMAFDFILDNVQVVLQQTYGSTLKVT</sequence>
<protein>
    <recommendedName>
        <fullName>DNA repair protein REV1</fullName>
        <ecNumber>2.7.7.-</ecNumber>
    </recommendedName>
    <alternativeName>
        <fullName>Alpha integrin-binding protein 80</fullName>
        <shortName>AIBP80</shortName>
    </alternativeName>
    <alternativeName>
        <fullName>Rev1-like terminal deoxycytidyl transferase</fullName>
    </alternativeName>
</protein>
<organism>
    <name type="scientific">Homo sapiens</name>
    <name type="common">Human</name>
    <dbReference type="NCBI Taxonomy" id="9606"/>
    <lineage>
        <taxon>Eukaryota</taxon>
        <taxon>Metazoa</taxon>
        <taxon>Chordata</taxon>
        <taxon>Craniata</taxon>
        <taxon>Vertebrata</taxon>
        <taxon>Euteleostomi</taxon>
        <taxon>Mammalia</taxon>
        <taxon>Eutheria</taxon>
        <taxon>Euarchontoglires</taxon>
        <taxon>Primates</taxon>
        <taxon>Haplorrhini</taxon>
        <taxon>Catarrhini</taxon>
        <taxon>Hominidae</taxon>
        <taxon>Homo</taxon>
    </lineage>
</organism>
<evidence type="ECO:0000250" key="1"/>
<evidence type="ECO:0000255" key="2"/>
<evidence type="ECO:0000255" key="3">
    <source>
        <dbReference type="PROSITE-ProRule" id="PRU00033"/>
    </source>
</evidence>
<evidence type="ECO:0000255" key="4">
    <source>
        <dbReference type="PROSITE-ProRule" id="PRU00216"/>
    </source>
</evidence>
<evidence type="ECO:0000256" key="5">
    <source>
        <dbReference type="SAM" id="MobiDB-lite"/>
    </source>
</evidence>
<evidence type="ECO:0000269" key="6">
    <source>
    </source>
</evidence>
<evidence type="ECO:0000269" key="7">
    <source>
    </source>
</evidence>
<evidence type="ECO:0000269" key="8">
    <source>
    </source>
</evidence>
<evidence type="ECO:0000269" key="9">
    <source>
    </source>
</evidence>
<evidence type="ECO:0000269" key="10">
    <source>
    </source>
</evidence>
<evidence type="ECO:0000269" key="11">
    <source>
    </source>
</evidence>
<evidence type="ECO:0000269" key="12">
    <source>
    </source>
</evidence>
<evidence type="ECO:0000269" key="13">
    <source>
    </source>
</evidence>
<evidence type="ECO:0000303" key="14">
    <source>
    </source>
</evidence>
<evidence type="ECO:0000303" key="15">
    <source>
    </source>
</evidence>
<evidence type="ECO:0000303" key="16">
    <source>
    </source>
</evidence>
<evidence type="ECO:0000305" key="17"/>
<evidence type="ECO:0007829" key="18">
    <source>
        <dbReference type="PDB" id="2EBW"/>
    </source>
</evidence>
<evidence type="ECO:0007829" key="19">
    <source>
        <dbReference type="PDB" id="3GQC"/>
    </source>
</evidence>
<evidence type="ECO:0007829" key="20">
    <source>
        <dbReference type="PDB" id="3VU7"/>
    </source>
</evidence>
<evidence type="ECO:0007829" key="21">
    <source>
        <dbReference type="PDB" id="4EXT"/>
    </source>
</evidence>
<evidence type="ECO:0007829" key="22">
    <source>
        <dbReference type="PDB" id="5VZM"/>
    </source>
</evidence>
<evidence type="ECO:0007829" key="23">
    <source>
        <dbReference type="PDB" id="6ASR"/>
    </source>
</evidence>